<feature type="initiator methionine" description="Removed" evidence="1">
    <location>
        <position position="1"/>
    </location>
</feature>
<feature type="chain" id="PRO_0000158368" description="Histone H4">
    <location>
        <begin position="2"/>
        <end position="103"/>
    </location>
</feature>
<feature type="DNA-binding region">
    <location>
        <begin position="17"/>
        <end position="21"/>
    </location>
</feature>
<feature type="region of interest" description="Disordered" evidence="3">
    <location>
        <begin position="1"/>
        <end position="20"/>
    </location>
</feature>
<feature type="compositionally biased region" description="Gly residues" evidence="3">
    <location>
        <begin position="1"/>
        <end position="14"/>
    </location>
</feature>
<feature type="modified residue" description="N6-acetyl-N6-methyllysine; alternate" evidence="2">
    <location>
        <position position="6"/>
    </location>
</feature>
<feature type="modified residue" description="N6-acetyl-N6-methyllysine; alternate" evidence="2">
    <location>
        <position position="13"/>
    </location>
</feature>
<proteinExistence type="inferred from homology"/>
<comment type="function">
    <text>Core component of nucleosome. Nucleosomes wrap and compact DNA into chromatin, limiting DNA accessibility to the cellular machineries which require DNA as a template. Histones thereby play a central role in transcription regulation, DNA repair, DNA replication and chromosomal stability. DNA accessibility is regulated via a complex set of post-translational modifications of histones, also called histone code, and nucleosome remodeling.</text>
</comment>
<comment type="subunit">
    <text>The nucleosome is a histone octamer containing two molecules each of H2A, H2B, H3 and H4 assembled in one H3-H4 heterotetramer and two H2A-H2B heterodimers. The octamer wraps approximately 147 bp of DNA.</text>
</comment>
<comment type="subcellular location">
    <subcellularLocation>
        <location evidence="1">Nucleus</location>
    </subcellularLocation>
    <subcellularLocation>
        <location evidence="1">Chromosome</location>
    </subcellularLocation>
</comment>
<comment type="similarity">
    <text evidence="4">Belongs to the histone H4 family.</text>
</comment>
<reference key="1">
    <citation type="journal article" date="1991" name="DNA Seq.">
        <title>An H3-H4 histone gene pair in the marine copepod Tigriopus californicus, contains an intergenic dyad symmetry element.</title>
        <authorList>
            <person name="Porter D."/>
            <person name="Brown D."/>
            <person name="Wells D."/>
        </authorList>
    </citation>
    <scope>NUCLEOTIDE SEQUENCE [GENOMIC DNA]</scope>
</reference>
<reference key="2">
    <citation type="journal article" date="1992" name="DNA Seq.">
        <title>Closely linked H2B genes in the marine copepod, Tigriopus californicus indicate a recent gene duplication or gene conversion event.</title>
        <authorList>
            <person name="Brown D."/>
            <person name="Cook A."/>
            <person name="Wagner M."/>
            <person name="Wells D."/>
        </authorList>
    </citation>
    <scope>NUCLEOTIDE SEQUENCE [GENOMIC DNA]</scope>
</reference>
<sequence>MTGRGKGGKGLGKGGAKRHRKVLRDNIQGITKPAIRRLARRGGVKRISGLIYEETRGVLKVFLENVIRDAVTYTEHAKRKTVTAMDVVYALKRQGRTLYGFGG</sequence>
<keyword id="KW-0007">Acetylation</keyword>
<keyword id="KW-0158">Chromosome</keyword>
<keyword id="KW-0238">DNA-binding</keyword>
<keyword id="KW-0488">Methylation</keyword>
<keyword id="KW-0544">Nucleosome core</keyword>
<keyword id="KW-0539">Nucleus</keyword>
<dbReference type="EMBL" id="X52393">
    <property type="protein sequence ID" value="CAA36639.1"/>
    <property type="molecule type" value="Genomic_DNA"/>
</dbReference>
<dbReference type="EMBL" id="M84797">
    <property type="protein sequence ID" value="AAC41553.1"/>
    <property type="molecule type" value="Genomic_DNA"/>
</dbReference>
<dbReference type="PIR" id="B56654">
    <property type="entry name" value="B56654"/>
</dbReference>
<dbReference type="SMR" id="P84045"/>
<dbReference type="EnsemblMetazoa" id="TCAL_07219-PA_mrna">
    <property type="protein sequence ID" value="TRY67257.1"/>
    <property type="gene ID" value="TCAL_07219"/>
</dbReference>
<dbReference type="EnsemblMetazoa" id="TCAL_07959-PA_mrna">
    <property type="protein sequence ID" value="TRY63369.1"/>
    <property type="gene ID" value="TCAL_07959"/>
</dbReference>
<dbReference type="EnsemblMetazoa" id="TCAL_12420-PA_mrna">
    <property type="protein sequence ID" value="TRY78286.1"/>
    <property type="gene ID" value="TCAL_12420"/>
</dbReference>
<dbReference type="EnsemblMetazoa" id="TCAL_13518-PA_mrna">
    <property type="protein sequence ID" value="TRY68643.1"/>
    <property type="gene ID" value="TCAL_13518"/>
</dbReference>
<dbReference type="OMA" id="QKEHING"/>
<dbReference type="OrthoDB" id="6352885at2759"/>
<dbReference type="GO" id="GO:0000786">
    <property type="term" value="C:nucleosome"/>
    <property type="evidence" value="ECO:0000250"/>
    <property type="project" value="UniProtKB"/>
</dbReference>
<dbReference type="GO" id="GO:0005634">
    <property type="term" value="C:nucleus"/>
    <property type="evidence" value="ECO:0007669"/>
    <property type="project" value="UniProtKB-SubCell"/>
</dbReference>
<dbReference type="GO" id="GO:0003677">
    <property type="term" value="F:DNA binding"/>
    <property type="evidence" value="ECO:0000250"/>
    <property type="project" value="UniProtKB"/>
</dbReference>
<dbReference type="GO" id="GO:0046982">
    <property type="term" value="F:protein heterodimerization activity"/>
    <property type="evidence" value="ECO:0007669"/>
    <property type="project" value="InterPro"/>
</dbReference>
<dbReference type="GO" id="GO:0030527">
    <property type="term" value="F:structural constituent of chromatin"/>
    <property type="evidence" value="ECO:0007669"/>
    <property type="project" value="InterPro"/>
</dbReference>
<dbReference type="GO" id="GO:0006334">
    <property type="term" value="P:nucleosome assembly"/>
    <property type="evidence" value="ECO:0000250"/>
    <property type="project" value="UniProtKB"/>
</dbReference>
<dbReference type="CDD" id="cd22912">
    <property type="entry name" value="HFD_H4"/>
    <property type="match status" value="1"/>
</dbReference>
<dbReference type="FunFam" id="1.10.20.10:FF:000002">
    <property type="entry name" value="Histone H4"/>
    <property type="match status" value="1"/>
</dbReference>
<dbReference type="Gene3D" id="1.10.20.10">
    <property type="entry name" value="Histone, subunit A"/>
    <property type="match status" value="1"/>
</dbReference>
<dbReference type="InterPro" id="IPR035425">
    <property type="entry name" value="CENP-T/H4_C"/>
</dbReference>
<dbReference type="InterPro" id="IPR009072">
    <property type="entry name" value="Histone-fold"/>
</dbReference>
<dbReference type="InterPro" id="IPR001951">
    <property type="entry name" value="Histone_H4"/>
</dbReference>
<dbReference type="InterPro" id="IPR019809">
    <property type="entry name" value="Histone_H4_CS"/>
</dbReference>
<dbReference type="InterPro" id="IPR004823">
    <property type="entry name" value="TAF_TATA-bd_Histone-like_dom"/>
</dbReference>
<dbReference type="PANTHER" id="PTHR10484">
    <property type="entry name" value="HISTONE H4"/>
    <property type="match status" value="1"/>
</dbReference>
<dbReference type="Pfam" id="PF15511">
    <property type="entry name" value="CENP-T_C"/>
    <property type="match status" value="1"/>
</dbReference>
<dbReference type="PRINTS" id="PR00623">
    <property type="entry name" value="HISTONEH4"/>
</dbReference>
<dbReference type="SMART" id="SM00417">
    <property type="entry name" value="H4"/>
    <property type="match status" value="1"/>
</dbReference>
<dbReference type="SMART" id="SM00803">
    <property type="entry name" value="TAF"/>
    <property type="match status" value="1"/>
</dbReference>
<dbReference type="SUPFAM" id="SSF47113">
    <property type="entry name" value="Histone-fold"/>
    <property type="match status" value="1"/>
</dbReference>
<dbReference type="PROSITE" id="PS00047">
    <property type="entry name" value="HISTONE_H4"/>
    <property type="match status" value="1"/>
</dbReference>
<gene>
    <name type="primary">His4</name>
</gene>
<accession>P84045</accession>
<accession>P02307</accession>
<accession>Q9VFH7</accession>
<protein>
    <recommendedName>
        <fullName>Histone H4</fullName>
    </recommendedName>
</protein>
<name>H4_TIGCA</name>
<organism>
    <name type="scientific">Tigriopus californicus</name>
    <name type="common">Marine copepod</name>
    <dbReference type="NCBI Taxonomy" id="6832"/>
    <lineage>
        <taxon>Eukaryota</taxon>
        <taxon>Metazoa</taxon>
        <taxon>Ecdysozoa</taxon>
        <taxon>Arthropoda</taxon>
        <taxon>Crustacea</taxon>
        <taxon>Multicrustacea</taxon>
        <taxon>Hexanauplia</taxon>
        <taxon>Copepoda</taxon>
        <taxon>Harpacticoida</taxon>
        <taxon>Harpacticidae</taxon>
        <taxon>Tigriopus</taxon>
    </lineage>
</organism>
<evidence type="ECO:0000250" key="1"/>
<evidence type="ECO:0000250" key="2">
    <source>
        <dbReference type="UniProtKB" id="P62805"/>
    </source>
</evidence>
<evidence type="ECO:0000256" key="3">
    <source>
        <dbReference type="SAM" id="MobiDB-lite"/>
    </source>
</evidence>
<evidence type="ECO:0000305" key="4"/>